<evidence type="ECO:0000269" key="1">
    <source>
    </source>
</evidence>
<evidence type="ECO:0000305" key="2"/>
<feature type="chain" id="PRO_0000424705" description="Thioredoxin-like protein YLS8">
    <location>
        <begin position="1"/>
        <end position="142"/>
    </location>
</feature>
<feature type="sequence conflict" description="In Ref. 5; AAM61612." evidence="2" ref="5">
    <original>V</original>
    <variation>F</variation>
    <location>
        <position position="48"/>
    </location>
</feature>
<name>YLS8_ARATH</name>
<proteinExistence type="evidence at protein level"/>
<dbReference type="EMBL" id="AB047811">
    <property type="protein sequence ID" value="BAB32888.1"/>
    <property type="molecule type" value="mRNA"/>
</dbReference>
<dbReference type="EMBL" id="AL392174">
    <property type="protein sequence ID" value="CAC08329.1"/>
    <property type="molecule type" value="Genomic_DNA"/>
</dbReference>
<dbReference type="EMBL" id="CP002688">
    <property type="protein sequence ID" value="AED91278.1"/>
    <property type="molecule type" value="Genomic_DNA"/>
</dbReference>
<dbReference type="EMBL" id="AF324685">
    <property type="protein sequence ID" value="AAG40036.1"/>
    <property type="molecule type" value="mRNA"/>
</dbReference>
<dbReference type="EMBL" id="AF326857">
    <property type="protein sequence ID" value="AAG41439.1"/>
    <property type="molecule type" value="mRNA"/>
</dbReference>
<dbReference type="EMBL" id="AF339680">
    <property type="protein sequence ID" value="AAK00362.1"/>
    <property type="molecule type" value="mRNA"/>
</dbReference>
<dbReference type="EMBL" id="AF375407">
    <property type="protein sequence ID" value="AAK52991.1"/>
    <property type="molecule type" value="mRNA"/>
</dbReference>
<dbReference type="EMBL" id="AY066051">
    <property type="protein sequence ID" value="AAL47418.1"/>
    <property type="molecule type" value="mRNA"/>
</dbReference>
<dbReference type="EMBL" id="AY085055">
    <property type="protein sequence ID" value="AAM61612.1"/>
    <property type="molecule type" value="mRNA"/>
</dbReference>
<dbReference type="RefSeq" id="NP_196446.1">
    <property type="nucleotide sequence ID" value="NM_120912.3"/>
</dbReference>
<dbReference type="SMR" id="Q9FE62"/>
<dbReference type="BioGRID" id="16003">
    <property type="interactions" value="1"/>
</dbReference>
<dbReference type="FunCoup" id="Q9FE62">
    <property type="interactions" value="4042"/>
</dbReference>
<dbReference type="IntAct" id="Q9FE62">
    <property type="interactions" value="1"/>
</dbReference>
<dbReference type="STRING" id="3702.Q9FE62"/>
<dbReference type="iPTMnet" id="Q9FE62"/>
<dbReference type="PaxDb" id="3702-AT5G08290.1"/>
<dbReference type="ProteomicsDB" id="242841"/>
<dbReference type="EnsemblPlants" id="AT5G08290.1">
    <property type="protein sequence ID" value="AT5G08290.1"/>
    <property type="gene ID" value="AT5G08290"/>
</dbReference>
<dbReference type="GeneID" id="830725"/>
<dbReference type="Gramene" id="AT5G08290.1">
    <property type="protein sequence ID" value="AT5G08290.1"/>
    <property type="gene ID" value="AT5G08290"/>
</dbReference>
<dbReference type="KEGG" id="ath:AT5G08290"/>
<dbReference type="Araport" id="AT5G08290"/>
<dbReference type="TAIR" id="AT5G08290">
    <property type="gene designation" value="YLS8"/>
</dbReference>
<dbReference type="eggNOG" id="KOG3414">
    <property type="taxonomic scope" value="Eukaryota"/>
</dbReference>
<dbReference type="HOGENOM" id="CLU_117348_0_0_1"/>
<dbReference type="InParanoid" id="Q9FE62"/>
<dbReference type="OMA" id="GMYELYD"/>
<dbReference type="OrthoDB" id="147752at2759"/>
<dbReference type="PhylomeDB" id="Q9FE62"/>
<dbReference type="PRO" id="PR:Q9FE62"/>
<dbReference type="Proteomes" id="UP000006548">
    <property type="component" value="Chromosome 5"/>
</dbReference>
<dbReference type="ExpressionAtlas" id="Q9FE62">
    <property type="expression patterns" value="baseline and differential"/>
</dbReference>
<dbReference type="GO" id="GO:0005737">
    <property type="term" value="C:cytoplasm"/>
    <property type="evidence" value="ECO:0007005"/>
    <property type="project" value="TAIR"/>
</dbReference>
<dbReference type="GO" id="GO:0005634">
    <property type="term" value="C:nucleus"/>
    <property type="evidence" value="ECO:0007005"/>
    <property type="project" value="TAIR"/>
</dbReference>
<dbReference type="GO" id="GO:0046540">
    <property type="term" value="C:U4/U6 x U5 tri-snRNP complex"/>
    <property type="evidence" value="ECO:0007669"/>
    <property type="project" value="InterPro"/>
</dbReference>
<dbReference type="GO" id="GO:0000398">
    <property type="term" value="P:mRNA splicing, via spliceosome"/>
    <property type="evidence" value="ECO:0007669"/>
    <property type="project" value="InterPro"/>
</dbReference>
<dbReference type="CDD" id="cd02954">
    <property type="entry name" value="DIM1"/>
    <property type="match status" value="1"/>
</dbReference>
<dbReference type="FunFam" id="3.40.30.10:FF:000004">
    <property type="entry name" value="Spliceosomal protein DIB1"/>
    <property type="match status" value="1"/>
</dbReference>
<dbReference type="Gene3D" id="3.40.30.10">
    <property type="entry name" value="Glutaredoxin"/>
    <property type="match status" value="1"/>
</dbReference>
<dbReference type="InterPro" id="IPR004123">
    <property type="entry name" value="Dim1"/>
</dbReference>
<dbReference type="InterPro" id="IPR036249">
    <property type="entry name" value="Thioredoxin-like_sf"/>
</dbReference>
<dbReference type="PANTHER" id="PTHR12052:SF13">
    <property type="entry name" value="THIOREDOXIN-LIKE PROTEIN YLS8"/>
    <property type="match status" value="1"/>
</dbReference>
<dbReference type="PANTHER" id="PTHR12052">
    <property type="entry name" value="THIOREDOXIN-LIKE PROTEN 4A, 4B"/>
    <property type="match status" value="1"/>
</dbReference>
<dbReference type="Pfam" id="PF02966">
    <property type="entry name" value="DIM1"/>
    <property type="match status" value="1"/>
</dbReference>
<dbReference type="PIRSF" id="PIRSF017199">
    <property type="entry name" value="mRNA_splic_U5"/>
    <property type="match status" value="1"/>
</dbReference>
<dbReference type="SMART" id="SM01410">
    <property type="entry name" value="DIM1"/>
    <property type="match status" value="1"/>
</dbReference>
<dbReference type="SUPFAM" id="SSF52833">
    <property type="entry name" value="Thioredoxin-like"/>
    <property type="match status" value="1"/>
</dbReference>
<reference key="1">
    <citation type="journal article" date="2001" name="Plant Cell Physiol.">
        <title>Isolation and RNA gel blot analysis of genes that could serve as potential molecular markers for leaf senescence in Arabidopsis thaliana.</title>
        <authorList>
            <person name="Yoshida S."/>
            <person name="Ito M."/>
            <person name="Nishida I."/>
            <person name="Watanabe A."/>
        </authorList>
    </citation>
    <scope>NUCLEOTIDE SEQUENCE [MRNA]</scope>
    <scope>TISSUE SPECIFICITY</scope>
    <scope>DEVELOPMENTAL STAGE</scope>
</reference>
<reference key="2">
    <citation type="journal article" date="2000" name="Nature">
        <title>Sequence and analysis of chromosome 5 of the plant Arabidopsis thaliana.</title>
        <authorList>
            <person name="Tabata S."/>
            <person name="Kaneko T."/>
            <person name="Nakamura Y."/>
            <person name="Kotani H."/>
            <person name="Kato T."/>
            <person name="Asamizu E."/>
            <person name="Miyajima N."/>
            <person name="Sasamoto S."/>
            <person name="Kimura T."/>
            <person name="Hosouchi T."/>
            <person name="Kawashima K."/>
            <person name="Kohara M."/>
            <person name="Matsumoto M."/>
            <person name="Matsuno A."/>
            <person name="Muraki A."/>
            <person name="Nakayama S."/>
            <person name="Nakazaki N."/>
            <person name="Naruo K."/>
            <person name="Okumura S."/>
            <person name="Shinpo S."/>
            <person name="Takeuchi C."/>
            <person name="Wada T."/>
            <person name="Watanabe A."/>
            <person name="Yamada M."/>
            <person name="Yasuda M."/>
            <person name="Sato S."/>
            <person name="de la Bastide M."/>
            <person name="Huang E."/>
            <person name="Spiegel L."/>
            <person name="Gnoj L."/>
            <person name="O'Shaughnessy A."/>
            <person name="Preston R."/>
            <person name="Habermann K."/>
            <person name="Murray J."/>
            <person name="Johnson D."/>
            <person name="Rohlfing T."/>
            <person name="Nelson J."/>
            <person name="Stoneking T."/>
            <person name="Pepin K."/>
            <person name="Spieth J."/>
            <person name="Sekhon M."/>
            <person name="Armstrong J."/>
            <person name="Becker M."/>
            <person name="Belter E."/>
            <person name="Cordum H."/>
            <person name="Cordes M."/>
            <person name="Courtney L."/>
            <person name="Courtney W."/>
            <person name="Dante M."/>
            <person name="Du H."/>
            <person name="Edwards J."/>
            <person name="Fryman J."/>
            <person name="Haakensen B."/>
            <person name="Lamar E."/>
            <person name="Latreille P."/>
            <person name="Leonard S."/>
            <person name="Meyer R."/>
            <person name="Mulvaney E."/>
            <person name="Ozersky P."/>
            <person name="Riley A."/>
            <person name="Strowmatt C."/>
            <person name="Wagner-McPherson C."/>
            <person name="Wollam A."/>
            <person name="Yoakum M."/>
            <person name="Bell M."/>
            <person name="Dedhia N."/>
            <person name="Parnell L."/>
            <person name="Shah R."/>
            <person name="Rodriguez M."/>
            <person name="Hoon See L."/>
            <person name="Vil D."/>
            <person name="Baker J."/>
            <person name="Kirchoff K."/>
            <person name="Toth K."/>
            <person name="King L."/>
            <person name="Bahret A."/>
            <person name="Miller B."/>
            <person name="Marra M.A."/>
            <person name="Martienssen R."/>
            <person name="McCombie W.R."/>
            <person name="Wilson R.K."/>
            <person name="Murphy G."/>
            <person name="Bancroft I."/>
            <person name="Volckaert G."/>
            <person name="Wambutt R."/>
            <person name="Duesterhoeft A."/>
            <person name="Stiekema W."/>
            <person name="Pohl T."/>
            <person name="Entian K.-D."/>
            <person name="Terryn N."/>
            <person name="Hartley N."/>
            <person name="Bent E."/>
            <person name="Johnson S."/>
            <person name="Langham S.-A."/>
            <person name="McCullagh B."/>
            <person name="Robben J."/>
            <person name="Grymonprez B."/>
            <person name="Zimmermann W."/>
            <person name="Ramsperger U."/>
            <person name="Wedler H."/>
            <person name="Balke K."/>
            <person name="Wedler E."/>
            <person name="Peters S."/>
            <person name="van Staveren M."/>
            <person name="Dirkse W."/>
            <person name="Mooijman P."/>
            <person name="Klein Lankhorst R."/>
            <person name="Weitzenegger T."/>
            <person name="Bothe G."/>
            <person name="Rose M."/>
            <person name="Hauf J."/>
            <person name="Berneiser S."/>
            <person name="Hempel S."/>
            <person name="Feldpausch M."/>
            <person name="Lamberth S."/>
            <person name="Villarroel R."/>
            <person name="Gielen J."/>
            <person name="Ardiles W."/>
            <person name="Bents O."/>
            <person name="Lemcke K."/>
            <person name="Kolesov G."/>
            <person name="Mayer K.F.X."/>
            <person name="Rudd S."/>
            <person name="Schoof H."/>
            <person name="Schueller C."/>
            <person name="Zaccaria P."/>
            <person name="Mewes H.-W."/>
            <person name="Bevan M."/>
            <person name="Fransz P.F."/>
        </authorList>
    </citation>
    <scope>NUCLEOTIDE SEQUENCE [LARGE SCALE GENOMIC DNA]</scope>
    <source>
        <strain>cv. Columbia</strain>
    </source>
</reference>
<reference key="3">
    <citation type="journal article" date="2017" name="Plant J.">
        <title>Araport11: a complete reannotation of the Arabidopsis thaliana reference genome.</title>
        <authorList>
            <person name="Cheng C.Y."/>
            <person name="Krishnakumar V."/>
            <person name="Chan A.P."/>
            <person name="Thibaud-Nissen F."/>
            <person name="Schobel S."/>
            <person name="Town C.D."/>
        </authorList>
    </citation>
    <scope>GENOME REANNOTATION</scope>
    <source>
        <strain>cv. Columbia</strain>
    </source>
</reference>
<reference key="4">
    <citation type="journal article" date="2003" name="Science">
        <title>Empirical analysis of transcriptional activity in the Arabidopsis genome.</title>
        <authorList>
            <person name="Yamada K."/>
            <person name="Lim J."/>
            <person name="Dale J.M."/>
            <person name="Chen H."/>
            <person name="Shinn P."/>
            <person name="Palm C.J."/>
            <person name="Southwick A.M."/>
            <person name="Wu H.C."/>
            <person name="Kim C.J."/>
            <person name="Nguyen M."/>
            <person name="Pham P.K."/>
            <person name="Cheuk R.F."/>
            <person name="Karlin-Newmann G."/>
            <person name="Liu S.X."/>
            <person name="Lam B."/>
            <person name="Sakano H."/>
            <person name="Wu T."/>
            <person name="Yu G."/>
            <person name="Miranda M."/>
            <person name="Quach H.L."/>
            <person name="Tripp M."/>
            <person name="Chang C.H."/>
            <person name="Lee J.M."/>
            <person name="Toriumi M.J."/>
            <person name="Chan M.M."/>
            <person name="Tang C.C."/>
            <person name="Onodera C.S."/>
            <person name="Deng J.M."/>
            <person name="Akiyama K."/>
            <person name="Ansari Y."/>
            <person name="Arakawa T."/>
            <person name="Banh J."/>
            <person name="Banno F."/>
            <person name="Bowser L."/>
            <person name="Brooks S.Y."/>
            <person name="Carninci P."/>
            <person name="Chao Q."/>
            <person name="Choy N."/>
            <person name="Enju A."/>
            <person name="Goldsmith A.D."/>
            <person name="Gurjal M."/>
            <person name="Hansen N.F."/>
            <person name="Hayashizaki Y."/>
            <person name="Johnson-Hopson C."/>
            <person name="Hsuan V.W."/>
            <person name="Iida K."/>
            <person name="Karnes M."/>
            <person name="Khan S."/>
            <person name="Koesema E."/>
            <person name="Ishida J."/>
            <person name="Jiang P.X."/>
            <person name="Jones T."/>
            <person name="Kawai J."/>
            <person name="Kamiya A."/>
            <person name="Meyers C."/>
            <person name="Nakajima M."/>
            <person name="Narusaka M."/>
            <person name="Seki M."/>
            <person name="Sakurai T."/>
            <person name="Satou M."/>
            <person name="Tamse R."/>
            <person name="Vaysberg M."/>
            <person name="Wallender E.K."/>
            <person name="Wong C."/>
            <person name="Yamamura Y."/>
            <person name="Yuan S."/>
            <person name="Shinozaki K."/>
            <person name="Davis R.W."/>
            <person name="Theologis A."/>
            <person name="Ecker J.R."/>
        </authorList>
    </citation>
    <scope>NUCLEOTIDE SEQUENCE [LARGE SCALE MRNA]</scope>
    <source>
        <strain>cv. Columbia</strain>
    </source>
</reference>
<reference key="5">
    <citation type="submission" date="2002-03" db="EMBL/GenBank/DDBJ databases">
        <title>Full-length cDNA from Arabidopsis thaliana.</title>
        <authorList>
            <person name="Brover V.V."/>
            <person name="Troukhan M.E."/>
            <person name="Alexandrov N.A."/>
            <person name="Lu Y.-P."/>
            <person name="Flavell R.B."/>
            <person name="Feldmann K.A."/>
        </authorList>
    </citation>
    <scope>NUCLEOTIDE SEQUENCE [LARGE SCALE MRNA]</scope>
</reference>
<organism>
    <name type="scientific">Arabidopsis thaliana</name>
    <name type="common">Mouse-ear cress</name>
    <dbReference type="NCBI Taxonomy" id="3702"/>
    <lineage>
        <taxon>Eukaryota</taxon>
        <taxon>Viridiplantae</taxon>
        <taxon>Streptophyta</taxon>
        <taxon>Embryophyta</taxon>
        <taxon>Tracheophyta</taxon>
        <taxon>Spermatophyta</taxon>
        <taxon>Magnoliopsida</taxon>
        <taxon>eudicotyledons</taxon>
        <taxon>Gunneridae</taxon>
        <taxon>Pentapetalae</taxon>
        <taxon>rosids</taxon>
        <taxon>malvids</taxon>
        <taxon>Brassicales</taxon>
        <taxon>Brassicaceae</taxon>
        <taxon>Camelineae</taxon>
        <taxon>Arabidopsis</taxon>
    </lineage>
</organism>
<gene>
    <name type="primary">YLS8</name>
    <name type="ordered locus">At5g08290</name>
    <name type="ORF">F8L15.20</name>
</gene>
<accession>Q9FE62</accession>
<accession>Q8LF46</accession>
<comment type="interaction">
    <interactant intactId="EBI-25520077">
        <id>Q9FE62</id>
    </interactant>
    <interactant intactId="EBI-4426557">
        <id>Q84MB2</id>
        <label>TIFY8</label>
    </interactant>
    <organismsDiffer>false</organismsDiffer>
    <experiments>3</experiments>
</comment>
<comment type="tissue specificity">
    <text evidence="1">Expressed in roots, leaves, stems, cauline leaves and flowers.</text>
</comment>
<comment type="developmental stage">
    <text evidence="1">Up-regulated in leaves during natural senescence.</text>
</comment>
<comment type="similarity">
    <text evidence="2">Belongs to the DIM1 family.</text>
</comment>
<sequence length="142" mass="16591">MSYLLPHLHSGWAVDQSILAEEERLVVIRFGHDWDETCMQMDEVLASVAETIKNFAVIYLVDITEVPDFNTMYELYDPSTVMFFFRNKHIMIDLGTGNNNKINWALKDKQEFIDIIETVYRGARKGRGLVIAPKDYSTKYRY</sequence>
<protein>
    <recommendedName>
        <fullName>Thioredoxin-like protein YLS8</fullName>
    </recommendedName>
    <alternativeName>
        <fullName>Protein YELLOW-LEAF-SPECIFIC GENE 8</fullName>
    </alternativeName>
</protein>
<keyword id="KW-1185">Reference proteome</keyword>